<dbReference type="EC" id="2.8.1.13" evidence="1"/>
<dbReference type="EMBL" id="AE000516">
    <property type="protein sequence ID" value="AAK47438.1"/>
    <property type="molecule type" value="Genomic_DNA"/>
</dbReference>
<dbReference type="PIR" id="C70858">
    <property type="entry name" value="C70858"/>
</dbReference>
<dbReference type="RefSeq" id="WP_003415909.1">
    <property type="nucleotide sequence ID" value="NZ_KK341227.1"/>
</dbReference>
<dbReference type="SMR" id="P9WJS4"/>
<dbReference type="KEGG" id="mtc:MT3108"/>
<dbReference type="PATRIC" id="fig|83331.31.peg.3350"/>
<dbReference type="HOGENOM" id="CLU_035188_0_2_11"/>
<dbReference type="Proteomes" id="UP000001020">
    <property type="component" value="Chromosome"/>
</dbReference>
<dbReference type="GO" id="GO:0005737">
    <property type="term" value="C:cytoplasm"/>
    <property type="evidence" value="ECO:0007669"/>
    <property type="project" value="UniProtKB-SubCell"/>
</dbReference>
<dbReference type="GO" id="GO:0005524">
    <property type="term" value="F:ATP binding"/>
    <property type="evidence" value="ECO:0007669"/>
    <property type="project" value="UniProtKB-KW"/>
</dbReference>
<dbReference type="GO" id="GO:0000049">
    <property type="term" value="F:tRNA binding"/>
    <property type="evidence" value="ECO:0007669"/>
    <property type="project" value="UniProtKB-KW"/>
</dbReference>
<dbReference type="GO" id="GO:0103016">
    <property type="term" value="F:tRNA-uridine 2-sulfurtransferase activity"/>
    <property type="evidence" value="ECO:0007669"/>
    <property type="project" value="UniProtKB-EC"/>
</dbReference>
<dbReference type="GO" id="GO:0002143">
    <property type="term" value="P:tRNA wobble position uridine thiolation"/>
    <property type="evidence" value="ECO:0007669"/>
    <property type="project" value="TreeGrafter"/>
</dbReference>
<dbReference type="CDD" id="cd01998">
    <property type="entry name" value="MnmA_TRMU-like"/>
    <property type="match status" value="1"/>
</dbReference>
<dbReference type="FunFam" id="3.40.50.620:FF:000057">
    <property type="entry name" value="tRNA-specific 2-thiouridylase MnmA"/>
    <property type="match status" value="1"/>
</dbReference>
<dbReference type="Gene3D" id="2.30.30.280">
    <property type="entry name" value="Adenine nucleotide alpha hydrolases-like domains"/>
    <property type="match status" value="1"/>
</dbReference>
<dbReference type="Gene3D" id="3.40.50.620">
    <property type="entry name" value="HUPs"/>
    <property type="match status" value="1"/>
</dbReference>
<dbReference type="Gene3D" id="2.40.30.10">
    <property type="entry name" value="Translation factors"/>
    <property type="match status" value="1"/>
</dbReference>
<dbReference type="HAMAP" id="MF_00144">
    <property type="entry name" value="tRNA_thiouridyl_MnmA"/>
    <property type="match status" value="1"/>
</dbReference>
<dbReference type="InterPro" id="IPR004506">
    <property type="entry name" value="MnmA-like"/>
</dbReference>
<dbReference type="InterPro" id="IPR046885">
    <property type="entry name" value="MnmA-like_C"/>
</dbReference>
<dbReference type="InterPro" id="IPR046884">
    <property type="entry name" value="MnmA-like_central"/>
</dbReference>
<dbReference type="InterPro" id="IPR023382">
    <property type="entry name" value="MnmA-like_central_sf"/>
</dbReference>
<dbReference type="InterPro" id="IPR014729">
    <property type="entry name" value="Rossmann-like_a/b/a_fold"/>
</dbReference>
<dbReference type="NCBIfam" id="NF001138">
    <property type="entry name" value="PRK00143.1"/>
    <property type="match status" value="1"/>
</dbReference>
<dbReference type="NCBIfam" id="TIGR00420">
    <property type="entry name" value="trmU"/>
    <property type="match status" value="1"/>
</dbReference>
<dbReference type="PANTHER" id="PTHR11933:SF5">
    <property type="entry name" value="MITOCHONDRIAL TRNA-SPECIFIC 2-THIOURIDYLASE 1"/>
    <property type="match status" value="1"/>
</dbReference>
<dbReference type="PANTHER" id="PTHR11933">
    <property type="entry name" value="TRNA 5-METHYLAMINOMETHYL-2-THIOURIDYLATE -METHYLTRANSFERASE"/>
    <property type="match status" value="1"/>
</dbReference>
<dbReference type="Pfam" id="PF03054">
    <property type="entry name" value="tRNA_Me_trans"/>
    <property type="match status" value="1"/>
</dbReference>
<dbReference type="Pfam" id="PF20258">
    <property type="entry name" value="tRNA_Me_trans_C"/>
    <property type="match status" value="1"/>
</dbReference>
<dbReference type="Pfam" id="PF20259">
    <property type="entry name" value="tRNA_Me_trans_M"/>
    <property type="match status" value="1"/>
</dbReference>
<dbReference type="SUPFAM" id="SSF52402">
    <property type="entry name" value="Adenine nucleotide alpha hydrolases-like"/>
    <property type="match status" value="1"/>
</dbReference>
<organism>
    <name type="scientific">Mycobacterium tuberculosis (strain CDC 1551 / Oshkosh)</name>
    <dbReference type="NCBI Taxonomy" id="83331"/>
    <lineage>
        <taxon>Bacteria</taxon>
        <taxon>Bacillati</taxon>
        <taxon>Actinomycetota</taxon>
        <taxon>Actinomycetes</taxon>
        <taxon>Mycobacteriales</taxon>
        <taxon>Mycobacteriaceae</taxon>
        <taxon>Mycobacterium</taxon>
        <taxon>Mycobacterium tuberculosis complex</taxon>
    </lineage>
</organism>
<proteinExistence type="inferred from homology"/>
<reference key="1">
    <citation type="journal article" date="2002" name="J. Bacteriol.">
        <title>Whole-genome comparison of Mycobacterium tuberculosis clinical and laboratory strains.</title>
        <authorList>
            <person name="Fleischmann R.D."/>
            <person name="Alland D."/>
            <person name="Eisen J.A."/>
            <person name="Carpenter L."/>
            <person name="White O."/>
            <person name="Peterson J.D."/>
            <person name="DeBoy R.T."/>
            <person name="Dodson R.J."/>
            <person name="Gwinn M.L."/>
            <person name="Haft D.H."/>
            <person name="Hickey E.K."/>
            <person name="Kolonay J.F."/>
            <person name="Nelson W.C."/>
            <person name="Umayam L.A."/>
            <person name="Ermolaeva M.D."/>
            <person name="Salzberg S.L."/>
            <person name="Delcher A."/>
            <person name="Utterback T.R."/>
            <person name="Weidman J.F."/>
            <person name="Khouri H.M."/>
            <person name="Gill J."/>
            <person name="Mikula A."/>
            <person name="Bishai W."/>
            <person name="Jacobs W.R. Jr."/>
            <person name="Venter J.C."/>
            <person name="Fraser C.M."/>
        </authorList>
    </citation>
    <scope>NUCLEOTIDE SEQUENCE [LARGE SCALE GENOMIC DNA]</scope>
    <source>
        <strain>CDC 1551 / Oshkosh</strain>
    </source>
</reference>
<sequence>MKVLAAMSGGVDSSVAAARMVDAGHEVVGVHMALSTAPGTLRTGSRGCCSKEDAADARRVADVLGIPFYVWDFAEKFKEDVINDFVSSYARGETPNPCVRCNQQIKFAALSARAVALGFDTVATGHYARLSGGRLRRAVDRDKDQSYVLAVLTAQQLRHAAFPIGDTPKRQIRAEAARRGLAVANKPDSHDICFIPSGNTKAFLGERIGVRRGVVVDADGVVLASHDGVHGFTIGQRRGLGIAGPGPNGRPRYVTAIDADTATVHVGDVTDLDVQTLTGRAPVFTAGAAPSGPVDCVVQVRAHGETVSAVAELIGDALFVQLHAPLRGVARGQTLVLYRPDPAGDEVLGSATIAGASGLSTGGNPGA</sequence>
<evidence type="ECO:0000255" key="1">
    <source>
        <dbReference type="HAMAP-Rule" id="MF_00144"/>
    </source>
</evidence>
<gene>
    <name evidence="1" type="primary">mnmA</name>
    <name type="synonym">trmU</name>
    <name type="ordered locus">MT3108</name>
</gene>
<feature type="chain" id="PRO_0000427779" description="tRNA-specific 2-thiouridylase MnmA">
    <location>
        <begin position="1"/>
        <end position="367"/>
    </location>
</feature>
<feature type="region of interest" description="Interaction with tRNA" evidence="1">
    <location>
        <begin position="143"/>
        <end position="145"/>
    </location>
</feature>
<feature type="active site" description="Nucleophile" evidence="1">
    <location>
        <position position="101"/>
    </location>
</feature>
<feature type="active site" description="Cysteine persulfide intermediate" evidence="1">
    <location>
        <position position="193"/>
    </location>
</feature>
<feature type="binding site" evidence="1">
    <location>
        <begin position="6"/>
        <end position="13"/>
    </location>
    <ligand>
        <name>ATP</name>
        <dbReference type="ChEBI" id="CHEBI:30616"/>
    </ligand>
</feature>
<feature type="binding site" evidence="1">
    <location>
        <position position="32"/>
    </location>
    <ligand>
        <name>ATP</name>
        <dbReference type="ChEBI" id="CHEBI:30616"/>
    </ligand>
</feature>
<feature type="binding site" evidence="1">
    <location>
        <position position="125"/>
    </location>
    <ligand>
        <name>ATP</name>
        <dbReference type="ChEBI" id="CHEBI:30616"/>
    </ligand>
</feature>
<feature type="site" description="Interaction with tRNA" evidence="1">
    <location>
        <position position="126"/>
    </location>
</feature>
<feature type="site" description="Interaction with tRNA" evidence="1">
    <location>
        <position position="333"/>
    </location>
</feature>
<feature type="disulfide bond" description="Alternate" evidence="1">
    <location>
        <begin position="101"/>
        <end position="193"/>
    </location>
</feature>
<name>MNMA_MYCTO</name>
<accession>P9WJS4</accession>
<accession>L0TBK2</accession>
<accession>O53271</accession>
<accession>P66976</accession>
<keyword id="KW-0067">ATP-binding</keyword>
<keyword id="KW-0963">Cytoplasm</keyword>
<keyword id="KW-1015">Disulfide bond</keyword>
<keyword id="KW-0547">Nucleotide-binding</keyword>
<keyword id="KW-1185">Reference proteome</keyword>
<keyword id="KW-0694">RNA-binding</keyword>
<keyword id="KW-0808">Transferase</keyword>
<keyword id="KW-0819">tRNA processing</keyword>
<keyword id="KW-0820">tRNA-binding</keyword>
<protein>
    <recommendedName>
        <fullName evidence="1">tRNA-specific 2-thiouridylase MnmA</fullName>
        <ecNumber evidence="1">2.8.1.13</ecNumber>
    </recommendedName>
</protein>
<comment type="function">
    <text evidence="1">Catalyzes the 2-thiolation of uridine at the wobble position (U34) of tRNA, leading to the formation of s(2)U34.</text>
</comment>
<comment type="catalytic activity">
    <reaction evidence="1">
        <text>S-sulfanyl-L-cysteinyl-[protein] + uridine(34) in tRNA + AH2 + ATP = 2-thiouridine(34) in tRNA + L-cysteinyl-[protein] + A + AMP + diphosphate + H(+)</text>
        <dbReference type="Rhea" id="RHEA:47032"/>
        <dbReference type="Rhea" id="RHEA-COMP:10131"/>
        <dbReference type="Rhea" id="RHEA-COMP:11726"/>
        <dbReference type="Rhea" id="RHEA-COMP:11727"/>
        <dbReference type="Rhea" id="RHEA-COMP:11728"/>
        <dbReference type="ChEBI" id="CHEBI:13193"/>
        <dbReference type="ChEBI" id="CHEBI:15378"/>
        <dbReference type="ChEBI" id="CHEBI:17499"/>
        <dbReference type="ChEBI" id="CHEBI:29950"/>
        <dbReference type="ChEBI" id="CHEBI:30616"/>
        <dbReference type="ChEBI" id="CHEBI:33019"/>
        <dbReference type="ChEBI" id="CHEBI:61963"/>
        <dbReference type="ChEBI" id="CHEBI:65315"/>
        <dbReference type="ChEBI" id="CHEBI:87170"/>
        <dbReference type="ChEBI" id="CHEBI:456215"/>
        <dbReference type="EC" id="2.8.1.13"/>
    </reaction>
</comment>
<comment type="subcellular location">
    <subcellularLocation>
        <location evidence="1">Cytoplasm</location>
    </subcellularLocation>
</comment>
<comment type="similarity">
    <text evidence="1">Belongs to the MnmA/TRMU family.</text>
</comment>